<reference key="1">
    <citation type="journal article" date="1994" name="Nature">
        <title>2.2 Mb of contiguous nucleotide sequence from chromosome III of C. elegans.</title>
        <authorList>
            <person name="Wilson R."/>
            <person name="Ainscough R."/>
            <person name="Anderson K."/>
            <person name="Baynes C."/>
            <person name="Berks M."/>
            <person name="Bonfield J."/>
            <person name="Burton J."/>
            <person name="Connell M."/>
            <person name="Copsey T."/>
            <person name="Cooper J."/>
            <person name="Coulson A."/>
            <person name="Craxton M."/>
            <person name="Dear S."/>
            <person name="Du Z."/>
            <person name="Durbin R."/>
            <person name="Favello A."/>
            <person name="Fraser A."/>
            <person name="Fulton L."/>
            <person name="Gardner A."/>
            <person name="Green P."/>
            <person name="Hawkins T."/>
            <person name="Hillier L."/>
            <person name="Jier M."/>
            <person name="Johnston L."/>
            <person name="Jones M."/>
            <person name="Kershaw J."/>
            <person name="Kirsten J."/>
            <person name="Laisster N."/>
            <person name="Latreille P."/>
            <person name="Lightning J."/>
            <person name="Lloyd C."/>
            <person name="Mortimore B."/>
            <person name="O'Callaghan M."/>
            <person name="Parsons J."/>
            <person name="Percy C."/>
            <person name="Rifken L."/>
            <person name="Roopra A."/>
            <person name="Saunders D."/>
            <person name="Shownkeen R."/>
            <person name="Sims M."/>
            <person name="Smaldon N."/>
            <person name="Smith A."/>
            <person name="Smith M."/>
            <person name="Sonnhammer E."/>
            <person name="Staden R."/>
            <person name="Sulston J."/>
            <person name="Thierry-Mieg J."/>
            <person name="Thomas K."/>
            <person name="Vaudin M."/>
            <person name="Vaughan K."/>
            <person name="Waterston R."/>
            <person name="Watson A."/>
            <person name="Weinstock L."/>
            <person name="Wilkinson-Sproat J."/>
            <person name="Wohldman P."/>
        </authorList>
    </citation>
    <scope>NUCLEOTIDE SEQUENCE [LARGE SCALE GENOMIC DNA]</scope>
    <source>
        <strain>Bristol N2</strain>
    </source>
</reference>
<reference key="2">
    <citation type="journal article" date="1998" name="Science">
        <title>Genome sequence of the nematode C. elegans: a platform for investigating biology.</title>
        <authorList>
            <consortium name="The C. elegans sequencing consortium"/>
        </authorList>
    </citation>
    <scope>NUCLEOTIDE SEQUENCE [LARGE SCALE GENOMIC DNA]</scope>
    <source>
        <strain>Bristol N2</strain>
    </source>
</reference>
<comment type="similarity">
    <text evidence="3">Belongs to the spectrin family.</text>
</comment>
<gene>
    <name evidence="4" type="primary">spc-2</name>
    <name evidence="4" type="ORF">C50C3.2/C50C3.3</name>
</gene>
<evidence type="ECO:0000255" key="1"/>
<evidence type="ECO:0000255" key="2">
    <source>
        <dbReference type="PROSITE-ProRule" id="PRU00448"/>
    </source>
</evidence>
<evidence type="ECO:0000305" key="3"/>
<evidence type="ECO:0000312" key="4">
    <source>
        <dbReference type="WormBase" id="C50C3.2"/>
    </source>
</evidence>
<feature type="chain" id="PRO_0000073458" description="Uncharacterized protein C50C3.2">
    <location>
        <begin position="1"/>
        <end position="2236"/>
    </location>
</feature>
<feature type="repeat" description="Spectrin 1">
    <location>
        <begin position="46"/>
        <end position="146"/>
    </location>
</feature>
<feature type="repeat" description="Spectrin 2">
    <location>
        <begin position="238"/>
        <end position="335"/>
    </location>
</feature>
<feature type="repeat" description="Spectrin 3">
    <location>
        <begin position="839"/>
        <end position="949"/>
    </location>
</feature>
<feature type="repeat" description="Spectrin 4">
    <location>
        <begin position="1048"/>
        <end position="1146"/>
    </location>
</feature>
<feature type="repeat" description="Spectrin 5">
    <location>
        <begin position="1261"/>
        <end position="1361"/>
    </location>
</feature>
<feature type="repeat" description="Spectrin 6">
    <location>
        <begin position="1367"/>
        <end position="1459"/>
    </location>
</feature>
<feature type="repeat" description="Spectrin 7">
    <location>
        <begin position="1562"/>
        <end position="1667"/>
    </location>
</feature>
<feature type="domain" description="EF-hand 1" evidence="2">
    <location>
        <begin position="2104"/>
        <end position="2139"/>
    </location>
</feature>
<feature type="domain" description="EF-hand 2" evidence="2">
    <location>
        <begin position="2141"/>
        <end position="2176"/>
    </location>
</feature>
<feature type="coiled-coil region" evidence="1">
    <location>
        <begin position="496"/>
        <end position="541"/>
    </location>
</feature>
<feature type="coiled-coil region" evidence="1">
    <location>
        <begin position="603"/>
        <end position="631"/>
    </location>
</feature>
<feature type="coiled-coil region" evidence="1">
    <location>
        <begin position="1835"/>
        <end position="1869"/>
    </location>
</feature>
<feature type="binding site" evidence="2">
    <location>
        <position position="2154"/>
    </location>
    <ligand>
        <name>Ca(2+)</name>
        <dbReference type="ChEBI" id="CHEBI:29108"/>
    </ligand>
</feature>
<feature type="binding site" evidence="2">
    <location>
        <position position="2156"/>
    </location>
    <ligand>
        <name>Ca(2+)</name>
        <dbReference type="ChEBI" id="CHEBI:29108"/>
    </ligand>
</feature>
<feature type="binding site" evidence="2">
    <location>
        <position position="2158"/>
    </location>
    <ligand>
        <name>Ca(2+)</name>
        <dbReference type="ChEBI" id="CHEBI:29108"/>
    </ligand>
</feature>
<feature type="binding site" evidence="2">
    <location>
        <position position="2160"/>
    </location>
    <ligand>
        <name>Ca(2+)</name>
        <dbReference type="ChEBI" id="CHEBI:29108"/>
    </ligand>
</feature>
<feature type="binding site" evidence="2">
    <location>
        <position position="2165"/>
    </location>
    <ligand>
        <name>Ca(2+)</name>
        <dbReference type="ChEBI" id="CHEBI:29108"/>
    </ligand>
</feature>
<accession>P34367</accession>
<accession>Q18736</accession>
<name>YLJ2_CAEEL</name>
<sequence length="2236" mass="260999">MKAIIHDDTVVREIEGQRVQVLQKFADFELKAINKRSSIIQSRQLQVYLRSAAEFKQVIESLIESSEAVVTSQCSESSIRGQKVIGRLQQEADGKHNNLPMLENEAARLLKEGHYASDEIQKTFNNVLSRWEYLLKLLALKWRQLEKEIESIEFKNKCDSIVDWILKIKESDESGKEIFDEIRKCSMVWNEISATFQQMLDPTATDTSNYEKVHETWSNFQEYIDSLHKKLSENERFQKFVDNAEDLIKWMDDKEKEICEKYSKMDFEVMMKYRKTVEIEMKSVEQRIKDLKEQFVGMENDNLRNIPDPKNHVIDVEQRFESFQAFVQKWKTDIENSADADKLMKEAENICCWSSEKIEDLKIMATSDTPDCDEIIMWIETNNFDFNSWDNVVVQFLASSQELLNKQNNGNVKQEVERTTELYELAKRTMKTCNEFLEDRIQTINMEKLIFQTHQKAVILASFLQNHEESPEDMNAEDIEKEIRVIDGITVRCTSVVEQIENIEDELRQKPEQLNQLSVYASKQVNDLNEMKEVLKTTVNSRKAILQRLLDVTYFLDNCCETRKHTDTMLSNVKSSRVKLEIVQPIKDQLDSLKVEMVDMMLDDQQKNMANEELRKTYENLKKIEMEVGRQASQKEARKAADRTEAFVGRVQNWIDNNQIQDDTDIVSETVNLRRTTTHYQHLLSICASYKKSIDSKLEELANVYTDNDPRCLLEGIQNSVENFEVKIHQKVDDTKKLLHITENMNELNSQNEWIRAKIKSLSAEPLWDSLLIAQKMRRRHDNDFEEIANRRKQITEVIQKSATTKDQPILLEIEQNWDRMKDLFDERGGVLERIIKLYEYDEESSTTSEWLREKMICADTIEPKEDESFNEVMVKKLEALTEEVENYKPRIVETHALLEDALVTPNTKDSTSQQTMKLKAVLARKQGEIESDYKALKKLVERKLKTLKAILQDADISHQIADIEQWIEVEQNQLNRYLASDSDELPTKLDDVMTNIQRRRSNLTDIKCNVVGQVQMQKIDDAFGMLDVFSFEVHRIRQKACRLEIFKKLESQTEDVIDAIQMKLEEINVSQSTSRKRQVAGDDLSNLAGDLETLRRRVVEALDRSKEVRAANADLAPQVYDTEERLEKQWTDVSKAYENHKKRMERCKILSELDNEMINMEQWIDTFNEEVTVVIGSIHDGLGVQVGLESIDTWREELSHRVDQLGGVKNSLSSVGNAITEQDKMDPWLERVSNIENNLVKARETIDTKQDDLCRFADILGAERDCERLYSWASGKRHQLETEATMCDAKTLVRRMNEVEKMMMSRIGEVDQLRDFLDNLKASKTSDTFQTTELENKFELLDVEWNHLEEELRRREVDLNDSMSQILIDEQFDTIRQWIKERTEALEADVEVSNKTKPDDIERMQKRHDELASDINDYHTIYEDFLNNGQVEEEKVQVIRHLWSSLIESSTTRQKSLAQECQKSRLFELLDGMSIWLIDAETDVHSTTNFIGLYNSVDAEKASRLLVSLGEQAGEKDDILIRIQCDESVDVIVEKLRNGISQLQMLIKANNEDLDVWKSMQKVVTAIDDEICWFKEINVIFSSTNVGNDVSSNDVLKRKHQRLQLETQRREQKVAKVVYLTTELVSSHRRPSLEYKFVEIDEKVAELTELLESNRQIAEIRTNRLEKWTEYFVTMNEIREKEQLLDQILDLKTGLPETVLADVERKLQVLETVGDHMDTLTIKAEQMSDDEVIRTKVAVTAIDQLRKKWLKMNEELKKMHQKIKESIEFTKFVSTCDTGIQCIREQEEKIGNLVRHQKPASNFENTAYHSTMTFVETYTKDTFEKLKVVCRKLQNSTDAEKKLSLVSERLNALKKQLDLLAEKIAVDDKFKLKVQNIQDEYSRTACELGNWLEQAEEDVSDVVWFQTKDSSEDCRETLLEILGTLRNEKSDLLGELELLEVELAELKEDVKTFTWHSFKTLATRMERLDQTISDRIRIADGEISRHSDNEKICEQAACTLKTYHNVIVDVKKELEILYSLKLEDQKKSLINLIDKVQKRGMIQDLEKWRSLMESRYIFNNKFSSATPHGVLVEMCQCLELMSSMLRSVEQSIADRNHNGVTEKQLHEFELAFDYFDRERNGWLDYKHFELCLKSQGYNFSAENTLKETMTLLDPSTTGHIQKHDYVRYMVKHETTNILDDHSAIEDALKNLDARKISDSMPRKEAEFFMSKIAKHAETSSDQVYLEYKDFVNSFY</sequence>
<keyword id="KW-0106">Calcium</keyword>
<keyword id="KW-0175">Coiled coil</keyword>
<keyword id="KW-0479">Metal-binding</keyword>
<keyword id="KW-1185">Reference proteome</keyword>
<keyword id="KW-0677">Repeat</keyword>
<organism>
    <name type="scientific">Caenorhabditis elegans</name>
    <dbReference type="NCBI Taxonomy" id="6239"/>
    <lineage>
        <taxon>Eukaryota</taxon>
        <taxon>Metazoa</taxon>
        <taxon>Ecdysozoa</taxon>
        <taxon>Nematoda</taxon>
        <taxon>Chromadorea</taxon>
        <taxon>Rhabditida</taxon>
        <taxon>Rhabditina</taxon>
        <taxon>Rhabditomorpha</taxon>
        <taxon>Rhabditoidea</taxon>
        <taxon>Rhabditidae</taxon>
        <taxon>Peloderinae</taxon>
        <taxon>Caenorhabditis</taxon>
    </lineage>
</organism>
<protein>
    <recommendedName>
        <fullName>Uncharacterized protein C50C3.2</fullName>
    </recommendedName>
</protein>
<dbReference type="EMBL" id="FO080718">
    <property type="protein sequence ID" value="CCD66129.2"/>
    <property type="molecule type" value="Genomic_DNA"/>
</dbReference>
<dbReference type="PIR" id="S44621">
    <property type="entry name" value="S44621"/>
</dbReference>
<dbReference type="SMR" id="P34367"/>
<dbReference type="BioGRID" id="41359">
    <property type="interactions" value="2"/>
</dbReference>
<dbReference type="IntAct" id="P34367">
    <property type="interactions" value="2"/>
</dbReference>
<dbReference type="MINT" id="P34367"/>
<dbReference type="STRING" id="6239.C50C3.2.1"/>
<dbReference type="PaxDb" id="6239-C50C3.2"/>
<dbReference type="PeptideAtlas" id="P34367"/>
<dbReference type="EnsemblMetazoa" id="C50C3.2.1">
    <property type="protein sequence ID" value="C50C3.2.1"/>
    <property type="gene ID" value="WBGene00016800"/>
</dbReference>
<dbReference type="KEGG" id="cel:CELE_C50C3.2"/>
<dbReference type="AGR" id="WB:WBGene00016800"/>
<dbReference type="CTD" id="176154"/>
<dbReference type="WormBase" id="C50C3.2">
    <property type="protein sequence ID" value="CE47978"/>
    <property type="gene ID" value="WBGene00016800"/>
    <property type="gene designation" value="spc-2"/>
</dbReference>
<dbReference type="eggNOG" id="KOG0040">
    <property type="taxonomic scope" value="Eukaryota"/>
</dbReference>
<dbReference type="GeneTree" id="ENSGT00970000196675"/>
<dbReference type="HOGENOM" id="CLU_230646_0_0_1"/>
<dbReference type="InParanoid" id="P34367"/>
<dbReference type="OMA" id="MNEVEKM"/>
<dbReference type="OrthoDB" id="3549872at2759"/>
<dbReference type="Reactome" id="R-CEL-375165">
    <property type="pathway name" value="NCAM signaling for neurite out-growth"/>
</dbReference>
<dbReference type="Reactome" id="R-CEL-5673001">
    <property type="pathway name" value="RAF/MAP kinase cascade"/>
</dbReference>
<dbReference type="Reactome" id="R-CEL-6807878">
    <property type="pathway name" value="COPI-mediated anterograde transport"/>
</dbReference>
<dbReference type="PRO" id="PR:P34367"/>
<dbReference type="Proteomes" id="UP000001940">
    <property type="component" value="Chromosome III"/>
</dbReference>
<dbReference type="Bgee" id="WBGene00016800">
    <property type="expression patterns" value="Expressed in material anatomical entity and 2 other cell types or tissues"/>
</dbReference>
<dbReference type="GO" id="GO:0030054">
    <property type="term" value="C:cell junction"/>
    <property type="evidence" value="ECO:0000318"/>
    <property type="project" value="GO_Central"/>
</dbReference>
<dbReference type="GO" id="GO:0042995">
    <property type="term" value="C:cell projection"/>
    <property type="evidence" value="ECO:0000318"/>
    <property type="project" value="GO_Central"/>
</dbReference>
<dbReference type="GO" id="GO:0030864">
    <property type="term" value="C:cortical actin cytoskeleton"/>
    <property type="evidence" value="ECO:0000318"/>
    <property type="project" value="GO_Central"/>
</dbReference>
<dbReference type="GO" id="GO:0005886">
    <property type="term" value="C:plasma membrane"/>
    <property type="evidence" value="ECO:0000318"/>
    <property type="project" value="GO_Central"/>
</dbReference>
<dbReference type="GO" id="GO:0051015">
    <property type="term" value="F:actin filament binding"/>
    <property type="evidence" value="ECO:0000318"/>
    <property type="project" value="GO_Central"/>
</dbReference>
<dbReference type="GO" id="GO:0005509">
    <property type="term" value="F:calcium ion binding"/>
    <property type="evidence" value="ECO:0007669"/>
    <property type="project" value="InterPro"/>
</dbReference>
<dbReference type="GO" id="GO:0030036">
    <property type="term" value="P:actin cytoskeleton organization"/>
    <property type="evidence" value="ECO:0000318"/>
    <property type="project" value="GO_Central"/>
</dbReference>
<dbReference type="CDD" id="cd00176">
    <property type="entry name" value="SPEC"/>
    <property type="match status" value="3"/>
</dbReference>
<dbReference type="Gene3D" id="1.20.58.60">
    <property type="match status" value="7"/>
</dbReference>
<dbReference type="Gene3D" id="1.10.238.10">
    <property type="entry name" value="EF-hand"/>
    <property type="match status" value="1"/>
</dbReference>
<dbReference type="InterPro" id="IPR011992">
    <property type="entry name" value="EF-hand-dom_pair"/>
</dbReference>
<dbReference type="InterPro" id="IPR018247">
    <property type="entry name" value="EF_Hand_1_Ca_BS"/>
</dbReference>
<dbReference type="InterPro" id="IPR002048">
    <property type="entry name" value="EF_hand_dom"/>
</dbReference>
<dbReference type="InterPro" id="IPR018159">
    <property type="entry name" value="Spectrin/alpha-actinin"/>
</dbReference>
<dbReference type="InterPro" id="IPR002017">
    <property type="entry name" value="Spectrin_repeat"/>
</dbReference>
<dbReference type="PANTHER" id="PTHR11915">
    <property type="entry name" value="SPECTRIN/FILAMIN RELATED CYTOSKELETAL PROTEIN"/>
    <property type="match status" value="1"/>
</dbReference>
<dbReference type="Pfam" id="PF00435">
    <property type="entry name" value="Spectrin"/>
    <property type="match status" value="2"/>
</dbReference>
<dbReference type="SMART" id="SM00150">
    <property type="entry name" value="SPEC"/>
    <property type="match status" value="7"/>
</dbReference>
<dbReference type="SUPFAM" id="SSF47473">
    <property type="entry name" value="EF-hand"/>
    <property type="match status" value="1"/>
</dbReference>
<dbReference type="SUPFAM" id="SSF46966">
    <property type="entry name" value="Spectrin repeat"/>
    <property type="match status" value="7"/>
</dbReference>
<dbReference type="PROSITE" id="PS00018">
    <property type="entry name" value="EF_HAND_1"/>
    <property type="match status" value="1"/>
</dbReference>
<dbReference type="PROSITE" id="PS50222">
    <property type="entry name" value="EF_HAND_2"/>
    <property type="match status" value="2"/>
</dbReference>
<proteinExistence type="inferred from homology"/>